<keyword id="KW-0227">DNA damage</keyword>
<keyword id="KW-0233">DNA recombination</keyword>
<keyword id="KW-0234">DNA repair</keyword>
<organism>
    <name type="scientific">Streptococcus thermophilus (strain CNRZ 1066)</name>
    <dbReference type="NCBI Taxonomy" id="299768"/>
    <lineage>
        <taxon>Bacteria</taxon>
        <taxon>Bacillati</taxon>
        <taxon>Bacillota</taxon>
        <taxon>Bacilli</taxon>
        <taxon>Lactobacillales</taxon>
        <taxon>Streptococcaceae</taxon>
        <taxon>Streptococcus</taxon>
    </lineage>
</organism>
<comment type="function">
    <text evidence="1">Involved in DNA repair and RecF pathway recombination.</text>
</comment>
<comment type="similarity">
    <text evidence="1">Belongs to the RecO family.</text>
</comment>
<dbReference type="EMBL" id="CP000024">
    <property type="protein sequence ID" value="AAV61645.1"/>
    <property type="molecule type" value="Genomic_DNA"/>
</dbReference>
<dbReference type="RefSeq" id="WP_002946256.1">
    <property type="nucleotide sequence ID" value="NC_006449.1"/>
</dbReference>
<dbReference type="SMR" id="Q5M209"/>
<dbReference type="GeneID" id="66897947"/>
<dbReference type="KEGG" id="stc:str0027"/>
<dbReference type="HOGENOM" id="CLU_066632_4_0_9"/>
<dbReference type="GO" id="GO:0043590">
    <property type="term" value="C:bacterial nucleoid"/>
    <property type="evidence" value="ECO:0007669"/>
    <property type="project" value="TreeGrafter"/>
</dbReference>
<dbReference type="GO" id="GO:0006310">
    <property type="term" value="P:DNA recombination"/>
    <property type="evidence" value="ECO:0007669"/>
    <property type="project" value="UniProtKB-UniRule"/>
</dbReference>
<dbReference type="GO" id="GO:0006302">
    <property type="term" value="P:double-strand break repair"/>
    <property type="evidence" value="ECO:0007669"/>
    <property type="project" value="TreeGrafter"/>
</dbReference>
<dbReference type="Gene3D" id="2.40.50.140">
    <property type="entry name" value="Nucleic acid-binding proteins"/>
    <property type="match status" value="1"/>
</dbReference>
<dbReference type="Gene3D" id="1.20.1440.120">
    <property type="entry name" value="Recombination protein O, C-terminal domain"/>
    <property type="match status" value="1"/>
</dbReference>
<dbReference type="HAMAP" id="MF_00201">
    <property type="entry name" value="RecO"/>
    <property type="match status" value="1"/>
</dbReference>
<dbReference type="InterPro" id="IPR037278">
    <property type="entry name" value="ARFGAP/RecO"/>
</dbReference>
<dbReference type="InterPro" id="IPR022572">
    <property type="entry name" value="DNA_rep/recomb_RecO_N"/>
</dbReference>
<dbReference type="InterPro" id="IPR012340">
    <property type="entry name" value="NA-bd_OB-fold"/>
</dbReference>
<dbReference type="InterPro" id="IPR003717">
    <property type="entry name" value="RecO"/>
</dbReference>
<dbReference type="InterPro" id="IPR042242">
    <property type="entry name" value="RecO_C"/>
</dbReference>
<dbReference type="NCBIfam" id="TIGR00613">
    <property type="entry name" value="reco"/>
    <property type="match status" value="1"/>
</dbReference>
<dbReference type="PANTHER" id="PTHR33991">
    <property type="entry name" value="DNA REPAIR PROTEIN RECO"/>
    <property type="match status" value="1"/>
</dbReference>
<dbReference type="PANTHER" id="PTHR33991:SF1">
    <property type="entry name" value="DNA REPAIR PROTEIN RECO"/>
    <property type="match status" value="1"/>
</dbReference>
<dbReference type="Pfam" id="PF02565">
    <property type="entry name" value="RecO_C"/>
    <property type="match status" value="1"/>
</dbReference>
<dbReference type="Pfam" id="PF11967">
    <property type="entry name" value="RecO_N"/>
    <property type="match status" value="1"/>
</dbReference>
<dbReference type="SUPFAM" id="SSF57863">
    <property type="entry name" value="ArfGap/RecO-like zinc finger"/>
    <property type="match status" value="1"/>
</dbReference>
<dbReference type="SUPFAM" id="SSF50249">
    <property type="entry name" value="Nucleic acid-binding proteins"/>
    <property type="match status" value="1"/>
</dbReference>
<name>RECO_STRT1</name>
<accession>Q5M209</accession>
<sequence>MQKLESRGFILFNRNYRENDKLVKIFTKQAGKRMFFVRGGGSGKLSAVIQPLNIAEFMMTVNDEGLSFIEDYSQAESFKEITSDIFKLSYATYLAALTDAAIADGVVDAQLFAFLEKTLVLMEEGLDYEILTNIFEIQVLDRFGVRLNFHECVFCHRVGLPFDFSYKFSGLLCPNHYEEDERRSHLDPNVPYLLDRFQGLSFEELRSISVKDEMKRKLRQFIDELYDNYVGIHLKSKKFIDNLNSWGHIMSKEDNAD</sequence>
<proteinExistence type="inferred from homology"/>
<reference key="1">
    <citation type="journal article" date="2004" name="Nat. Biotechnol.">
        <title>Complete sequence and comparative genome analysis of the dairy bacterium Streptococcus thermophilus.</title>
        <authorList>
            <person name="Bolotin A."/>
            <person name="Quinquis B."/>
            <person name="Renault P."/>
            <person name="Sorokin A."/>
            <person name="Ehrlich S.D."/>
            <person name="Kulakauskas S."/>
            <person name="Lapidus A."/>
            <person name="Goltsman E."/>
            <person name="Mazur M."/>
            <person name="Pusch G.D."/>
            <person name="Fonstein M."/>
            <person name="Overbeek R."/>
            <person name="Kyprides N."/>
            <person name="Purnelle B."/>
            <person name="Prozzi D."/>
            <person name="Ngui K."/>
            <person name="Masuy D."/>
            <person name="Hancy F."/>
            <person name="Burteau S."/>
            <person name="Boutry M."/>
            <person name="Delcour J."/>
            <person name="Goffeau A."/>
            <person name="Hols P."/>
        </authorList>
    </citation>
    <scope>NUCLEOTIDE SEQUENCE [LARGE SCALE GENOMIC DNA]</scope>
    <source>
        <strain>CNRZ 1066</strain>
    </source>
</reference>
<protein>
    <recommendedName>
        <fullName evidence="1">DNA repair protein RecO</fullName>
    </recommendedName>
    <alternativeName>
        <fullName evidence="1">Recombination protein O</fullName>
    </alternativeName>
</protein>
<feature type="chain" id="PRO_0000205015" description="DNA repair protein RecO">
    <location>
        <begin position="1"/>
        <end position="257"/>
    </location>
</feature>
<gene>
    <name evidence="1" type="primary">recO</name>
    <name type="ordered locus">str0027</name>
</gene>
<evidence type="ECO:0000255" key="1">
    <source>
        <dbReference type="HAMAP-Rule" id="MF_00201"/>
    </source>
</evidence>